<organism>
    <name type="scientific">Mycolicibacterium paratuberculosis (strain ATCC BAA-968 / K-10)</name>
    <name type="common">Mycobacterium paratuberculosis</name>
    <dbReference type="NCBI Taxonomy" id="262316"/>
    <lineage>
        <taxon>Bacteria</taxon>
        <taxon>Bacillati</taxon>
        <taxon>Actinomycetota</taxon>
        <taxon>Actinomycetes</taxon>
        <taxon>Mycobacteriales</taxon>
        <taxon>Mycobacteriaceae</taxon>
        <taxon>Mycobacterium</taxon>
        <taxon>Mycobacterium avium complex (MAC)</taxon>
    </lineage>
</organism>
<sequence>MAKTIAYDEEARRGLERGLNALADAVKVTLGPKGRNVVLEKKWGAPTITNDGVSIAKEIELEDPYEKIGAELVKEVAKKTDDVAGDGTTTATVLAQALVREGLRNVAAGANPLGLKRGIEKAVEKVTETLLKSAKEVETKDQIAATAAISAGDQSIGDLIAEAMDKVGNEGVITVEESNTFGLQLELTEGMRFDKGYISGYFVTDAERQEAVLEDPFILLVSSKVSTVKDLLPLLEKVIQAGKPLLIIAEDVEGEALSTLVVNKIRGTFKSVAVKAPGFGDRRKAMLQDMAILTGGQVISEEVGLSLESADISLLGKARKVVVTKDETTIVEGAGDSDAIAGRVAQIRTEIENSDSDYDREKLQERLAKLAGGVAVIKAGAATEVELKERKHRIEDAVRNAKAAVEEGIVAGGGVALLHAIPALDELKLEGEEATGANIVRVALEAPLKQIAFNGGLEPGVVAEKVRNSPAGTGLNAATGEYEDLLKAGIADPVKVTRSALQNAASIAGLFLTTEAVVADKPEKAAAPAGDPTGGMGGMDF</sequence>
<reference key="1">
    <citation type="submission" date="1993-08" db="EMBL/GenBank/DDBJ databases">
        <authorList>
            <person name="Bujdoso R."/>
        </authorList>
    </citation>
    <scope>NUCLEOTIDE SEQUENCE [GENOMIC DNA]</scope>
    <source>
        <strain>18</strain>
    </source>
</reference>
<reference key="2">
    <citation type="journal article" date="1995" name="Clin. Diagn. Lab. Immunol.">
        <title>Nucleotide sequence analysis and seroreactivities of the 65K heat shock protein from Mycobacterium paratuberculosis.</title>
        <authorList>
            <person name="El-Zaatari F.A.K."/>
            <person name="Naser S.A."/>
            <person name="Engstrand L."/>
            <person name="Burch P.E."/>
            <person name="Hachem C.Y."/>
            <person name="Whipple D.L."/>
            <person name="Graham D.Y."/>
        </authorList>
    </citation>
    <scope>NUCLEOTIDE SEQUENCE [GENOMIC DNA]</scope>
    <source>
        <strain>ATCC 43015 / CIP 103965 / Linda</strain>
    </source>
</reference>
<reference key="3">
    <citation type="journal article" date="2005" name="Proc. Natl. Acad. Sci. U.S.A.">
        <title>The complete genome sequence of Mycobacterium avium subspecies paratuberculosis.</title>
        <authorList>
            <person name="Li L."/>
            <person name="Bannantine J.P."/>
            <person name="Zhang Q."/>
            <person name="Amonsin A."/>
            <person name="May B.J."/>
            <person name="Alt D."/>
            <person name="Banerji N."/>
            <person name="Kanjilal S."/>
            <person name="Kapur V."/>
        </authorList>
    </citation>
    <scope>NUCLEOTIDE SEQUENCE [LARGE SCALE GENOMIC DNA]</scope>
    <source>
        <strain>ATCC BAA-968 / K-10</strain>
    </source>
</reference>
<accession>P42384</accession>
<gene>
    <name evidence="3" type="primary">groEL2</name>
    <name evidence="3" type="synonym">groL2</name>
    <name type="synonym">hsp65</name>
    <name type="synonym">mopA</name>
    <name type="ordered locus">MAP_3936</name>
</gene>
<feature type="initiator methionine" description="Removed" evidence="1">
    <location>
        <position position="1"/>
    </location>
</feature>
<feature type="chain" id="PRO_0000063442" description="Chaperonin GroEL 2">
    <location>
        <begin position="2"/>
        <end position="541"/>
    </location>
</feature>
<feature type="binding site" evidence="3">
    <location>
        <begin position="29"/>
        <end position="32"/>
    </location>
    <ligand>
        <name>ATP</name>
        <dbReference type="ChEBI" id="CHEBI:30616"/>
    </ligand>
</feature>
<feature type="binding site" evidence="3">
    <location>
        <begin position="86"/>
        <end position="90"/>
    </location>
    <ligand>
        <name>ATP</name>
        <dbReference type="ChEBI" id="CHEBI:30616"/>
    </ligand>
</feature>
<feature type="binding site" evidence="3">
    <location>
        <position position="413"/>
    </location>
    <ligand>
        <name>ATP</name>
        <dbReference type="ChEBI" id="CHEBI:30616"/>
    </ligand>
</feature>
<feature type="binding site" evidence="3">
    <location>
        <begin position="476"/>
        <end position="478"/>
    </location>
    <ligand>
        <name>ATP</name>
        <dbReference type="ChEBI" id="CHEBI:30616"/>
    </ligand>
</feature>
<feature type="binding site" evidence="3">
    <location>
        <position position="492"/>
    </location>
    <ligand>
        <name>ATP</name>
        <dbReference type="ChEBI" id="CHEBI:30616"/>
    </ligand>
</feature>
<feature type="sequence variant" description="In strain: Linda.">
    <original>A</original>
    <variation>S</variation>
    <location>
        <position position="45"/>
    </location>
</feature>
<feature type="sequence variant" description="In strain: Linda.">
    <original>E</original>
    <variation>K</variation>
    <location>
        <position position="481"/>
    </location>
</feature>
<feature type="sequence variant" description="In strain: Linda.">
    <original>AD</original>
    <variation>TE</variation>
    <location>
        <begin position="491"/>
        <end position="492"/>
    </location>
</feature>
<feature type="sequence variant" description="In strain: Linda.">
    <original>A</original>
    <variation>S</variation>
    <location>
        <position position="508"/>
    </location>
</feature>
<feature type="sequence variant" description="In strain: Linda.">
    <original>A</original>
    <variation>T</variation>
    <location>
        <position position="525"/>
    </location>
</feature>
<feature type="sequence variant" description="In strain: Linda.">
    <original>A</original>
    <variation>P</variation>
    <location>
        <position position="527"/>
    </location>
</feature>
<feature type="sequence conflict" description="In Ref. 1; CAA52630." evidence="4" ref="1">
    <original>L</original>
    <variation>P</variation>
    <location>
        <position position="429"/>
    </location>
</feature>
<feature type="sequence conflict" description="In Ref. 1 and 2." evidence="4" ref="1 2">
    <original>A</original>
    <variation>R</variation>
    <location>
        <position position="446"/>
    </location>
</feature>
<protein>
    <recommendedName>
        <fullName evidence="3">Chaperonin GroEL 2</fullName>
        <ecNumber evidence="3">5.6.1.7</ecNumber>
    </recommendedName>
    <alternativeName>
        <fullName evidence="3">60 kDa chaperonin 2</fullName>
    </alternativeName>
    <alternativeName>
        <fullName>65 kDa antigen</fullName>
    </alternativeName>
    <alternativeName>
        <fullName evidence="3">Chaperonin-60 2</fullName>
        <shortName evidence="3">Cpn60 2</shortName>
    </alternativeName>
    <alternativeName>
        <fullName>Heat shock protein 65</fullName>
    </alternativeName>
</protein>
<dbReference type="EC" id="5.6.1.7" evidence="3"/>
<dbReference type="EMBL" id="X74518">
    <property type="protein sequence ID" value="CAA52630.1"/>
    <property type="molecule type" value="Genomic_DNA"/>
</dbReference>
<dbReference type="EMBL" id="U15989">
    <property type="protein sequence ID" value="AAA99670.2"/>
    <property type="status" value="ALT_INIT"/>
    <property type="molecule type" value="Genomic_DNA"/>
</dbReference>
<dbReference type="EMBL" id="AE016958">
    <property type="protein sequence ID" value="AAS06486.1"/>
    <property type="molecule type" value="Genomic_DNA"/>
</dbReference>
<dbReference type="PIR" id="A37335">
    <property type="entry name" value="A37335"/>
</dbReference>
<dbReference type="PIR" id="S40245">
    <property type="entry name" value="S40245"/>
</dbReference>
<dbReference type="SMR" id="P42384"/>
<dbReference type="STRING" id="262316.MAP_3936"/>
<dbReference type="KEGG" id="mpa:MAP_3936"/>
<dbReference type="PATRIC" id="fig|262316.17.peg.4188"/>
<dbReference type="eggNOG" id="COG0459">
    <property type="taxonomic scope" value="Bacteria"/>
</dbReference>
<dbReference type="HOGENOM" id="CLU_016503_3_0_11"/>
<dbReference type="Proteomes" id="UP000000580">
    <property type="component" value="Chromosome"/>
</dbReference>
<dbReference type="GO" id="GO:0042603">
    <property type="term" value="C:capsule"/>
    <property type="evidence" value="ECO:0007669"/>
    <property type="project" value="UniProtKB-SubCell"/>
</dbReference>
<dbReference type="GO" id="GO:0009986">
    <property type="term" value="C:cell surface"/>
    <property type="evidence" value="ECO:0007669"/>
    <property type="project" value="UniProtKB-SubCell"/>
</dbReference>
<dbReference type="GO" id="GO:0005737">
    <property type="term" value="C:cytoplasm"/>
    <property type="evidence" value="ECO:0007669"/>
    <property type="project" value="UniProtKB-UniRule"/>
</dbReference>
<dbReference type="GO" id="GO:0005576">
    <property type="term" value="C:extracellular region"/>
    <property type="evidence" value="ECO:0007669"/>
    <property type="project" value="UniProtKB-KW"/>
</dbReference>
<dbReference type="GO" id="GO:0005524">
    <property type="term" value="F:ATP binding"/>
    <property type="evidence" value="ECO:0007669"/>
    <property type="project" value="UniProtKB-UniRule"/>
</dbReference>
<dbReference type="GO" id="GO:0140662">
    <property type="term" value="F:ATP-dependent protein folding chaperone"/>
    <property type="evidence" value="ECO:0007669"/>
    <property type="project" value="InterPro"/>
</dbReference>
<dbReference type="GO" id="GO:0016853">
    <property type="term" value="F:isomerase activity"/>
    <property type="evidence" value="ECO:0007669"/>
    <property type="project" value="UniProtKB-KW"/>
</dbReference>
<dbReference type="GO" id="GO:0051082">
    <property type="term" value="F:unfolded protein binding"/>
    <property type="evidence" value="ECO:0007669"/>
    <property type="project" value="UniProtKB-UniRule"/>
</dbReference>
<dbReference type="GO" id="GO:0042026">
    <property type="term" value="P:protein refolding"/>
    <property type="evidence" value="ECO:0007669"/>
    <property type="project" value="UniProtKB-UniRule"/>
</dbReference>
<dbReference type="CDD" id="cd03344">
    <property type="entry name" value="GroEL"/>
    <property type="match status" value="1"/>
</dbReference>
<dbReference type="FunFam" id="3.50.7.10:FF:000001">
    <property type="entry name" value="60 kDa chaperonin"/>
    <property type="match status" value="1"/>
</dbReference>
<dbReference type="Gene3D" id="3.50.7.10">
    <property type="entry name" value="GroEL"/>
    <property type="match status" value="1"/>
</dbReference>
<dbReference type="Gene3D" id="1.10.560.10">
    <property type="entry name" value="GroEL-like equatorial domain"/>
    <property type="match status" value="1"/>
</dbReference>
<dbReference type="Gene3D" id="3.30.260.10">
    <property type="entry name" value="TCP-1-like chaperonin intermediate domain"/>
    <property type="match status" value="1"/>
</dbReference>
<dbReference type="HAMAP" id="MF_00600">
    <property type="entry name" value="CH60"/>
    <property type="match status" value="1"/>
</dbReference>
<dbReference type="InterPro" id="IPR018370">
    <property type="entry name" value="Chaperonin_Cpn60_CS"/>
</dbReference>
<dbReference type="InterPro" id="IPR001844">
    <property type="entry name" value="Cpn60/GroEL"/>
</dbReference>
<dbReference type="InterPro" id="IPR002423">
    <property type="entry name" value="Cpn60/GroEL/TCP-1"/>
</dbReference>
<dbReference type="InterPro" id="IPR027409">
    <property type="entry name" value="GroEL-like_apical_dom_sf"/>
</dbReference>
<dbReference type="InterPro" id="IPR027413">
    <property type="entry name" value="GROEL-like_equatorial_sf"/>
</dbReference>
<dbReference type="InterPro" id="IPR027410">
    <property type="entry name" value="TCP-1-like_intermed_sf"/>
</dbReference>
<dbReference type="NCBIfam" id="TIGR02348">
    <property type="entry name" value="GroEL"/>
    <property type="match status" value="1"/>
</dbReference>
<dbReference type="NCBIfam" id="NF000592">
    <property type="entry name" value="PRK00013.1"/>
    <property type="match status" value="1"/>
</dbReference>
<dbReference type="NCBIfam" id="NF009487">
    <property type="entry name" value="PRK12849.1"/>
    <property type="match status" value="1"/>
</dbReference>
<dbReference type="NCBIfam" id="NF009488">
    <property type="entry name" value="PRK12850.1"/>
    <property type="match status" value="1"/>
</dbReference>
<dbReference type="NCBIfam" id="NF009489">
    <property type="entry name" value="PRK12851.1"/>
    <property type="match status" value="1"/>
</dbReference>
<dbReference type="PANTHER" id="PTHR45633">
    <property type="entry name" value="60 KDA HEAT SHOCK PROTEIN, MITOCHONDRIAL"/>
    <property type="match status" value="1"/>
</dbReference>
<dbReference type="Pfam" id="PF00118">
    <property type="entry name" value="Cpn60_TCP1"/>
    <property type="match status" value="1"/>
</dbReference>
<dbReference type="PRINTS" id="PR00298">
    <property type="entry name" value="CHAPERONIN60"/>
</dbReference>
<dbReference type="SUPFAM" id="SSF52029">
    <property type="entry name" value="GroEL apical domain-like"/>
    <property type="match status" value="1"/>
</dbReference>
<dbReference type="SUPFAM" id="SSF48592">
    <property type="entry name" value="GroEL equatorial domain-like"/>
    <property type="match status" value="1"/>
</dbReference>
<dbReference type="SUPFAM" id="SSF54849">
    <property type="entry name" value="GroEL-intermediate domain like"/>
    <property type="match status" value="1"/>
</dbReference>
<dbReference type="PROSITE" id="PS00296">
    <property type="entry name" value="CHAPERONINS_CPN60"/>
    <property type="match status" value="1"/>
</dbReference>
<name>CH602_MYCPA</name>
<evidence type="ECO:0000250" key="1"/>
<evidence type="ECO:0000250" key="2">
    <source>
        <dbReference type="UniProtKB" id="P9WPE7"/>
    </source>
</evidence>
<evidence type="ECO:0000255" key="3">
    <source>
        <dbReference type="HAMAP-Rule" id="MF_00600"/>
    </source>
</evidence>
<evidence type="ECO:0000305" key="4"/>
<proteinExistence type="inferred from homology"/>
<keyword id="KW-0067">ATP-binding</keyword>
<keyword id="KW-0134">Cell wall</keyword>
<keyword id="KW-0143">Chaperone</keyword>
<keyword id="KW-0413">Isomerase</keyword>
<keyword id="KW-0547">Nucleotide-binding</keyword>
<keyword id="KW-1185">Reference proteome</keyword>
<keyword id="KW-0964">Secreted</keyword>
<comment type="function">
    <text evidence="3">Together with its co-chaperonin GroES, plays an essential role in assisting protein folding. The GroEL-GroES system forms a nano-cage that allows encapsulation of the non-native substrate proteins and provides a physical environment optimized to promote and accelerate protein folding.</text>
</comment>
<comment type="catalytic activity">
    <reaction evidence="3">
        <text>ATP + H2O + a folded polypeptide = ADP + phosphate + an unfolded polypeptide.</text>
        <dbReference type="EC" id="5.6.1.7"/>
    </reaction>
</comment>
<comment type="subunit">
    <text evidence="3">Forms a cylinder of 14 subunits composed of two heptameric rings stacked back-to-back. Interacts with the co-chaperonin GroES.</text>
</comment>
<comment type="subcellular location">
    <subcellularLocation>
        <location evidence="2">Secreted</location>
        <location evidence="2">Capsule</location>
    </subcellularLocation>
    <subcellularLocation>
        <location evidence="2">Cell surface</location>
    </subcellularLocation>
    <subcellularLocation>
        <location evidence="2">Secreted</location>
        <location evidence="2">Cell wall</location>
    </subcellularLocation>
</comment>
<comment type="similarity">
    <text evidence="3">Belongs to the chaperonin (HSP60) family.</text>
</comment>
<comment type="sequence caution" evidence="4">
    <conflict type="erroneous initiation">
        <sequence resource="EMBL-CDS" id="AAA99670"/>
    </conflict>
</comment>